<sequence length="371" mass="40757">MNMDKETEQTLNYLPLGQSDPFGNGNEGTIGDFLGRYCNNPQEISPLTLQSFSLNSQISENFPISGGIRFPPYPGQFGSDREFGSQPTTQESNKSSLLDPDSVSDRVHTTKSNSRKRKSIPSGNGKESPASSSLTASNSKVSGENGGSKGGKRSKQDVAGSSKNGVEKCDSKGDNKDDAKPPEAPKDYIHVRARRGQATDSHSLAERARREKISERMTLLQDLVPGCNRITGKAVMLDEIINYVQSLQRQVEFLSMKLATVNPRMEFNANASLSTEMIQPGESLTQSLYAMACSEQRLPSAYYSLGKNMPRFSDTQFPSNDGFVHTETPGFWENNDLQSIVQMGFGDILQQQSNNNNNNCSEPTLQMKLEP</sequence>
<name>BH077_ARATH</name>
<evidence type="ECO:0000255" key="1">
    <source>
        <dbReference type="PROSITE-ProRule" id="PRU00981"/>
    </source>
</evidence>
<evidence type="ECO:0000256" key="2">
    <source>
        <dbReference type="SAM" id="MobiDB-lite"/>
    </source>
</evidence>
<evidence type="ECO:0000269" key="3">
    <source>
    </source>
</evidence>
<evidence type="ECO:0000269" key="4">
    <source>
    </source>
</evidence>
<evidence type="ECO:0000269" key="5">
    <source>
    </source>
</evidence>
<evidence type="ECO:0000305" key="6"/>
<organism>
    <name type="scientific">Arabidopsis thaliana</name>
    <name type="common">Mouse-ear cress</name>
    <dbReference type="NCBI Taxonomy" id="3702"/>
    <lineage>
        <taxon>Eukaryota</taxon>
        <taxon>Viridiplantae</taxon>
        <taxon>Streptophyta</taxon>
        <taxon>Embryophyta</taxon>
        <taxon>Tracheophyta</taxon>
        <taxon>Spermatophyta</taxon>
        <taxon>Magnoliopsida</taxon>
        <taxon>eudicotyledons</taxon>
        <taxon>Gunneridae</taxon>
        <taxon>Pentapetalae</taxon>
        <taxon>rosids</taxon>
        <taxon>malvids</taxon>
        <taxon>Brassicales</taxon>
        <taxon>Brassicaceae</taxon>
        <taxon>Camelineae</taxon>
        <taxon>Arabidopsis</taxon>
    </lineage>
</organism>
<protein>
    <recommendedName>
        <fullName>Transcription factor bHLH77</fullName>
    </recommendedName>
    <alternativeName>
        <fullName>Basic helix-loop-helix protein 77</fullName>
        <shortName>AtbHLH77</shortName>
        <shortName>bHLH 77</shortName>
    </alternativeName>
    <alternativeName>
        <fullName>Protein ACTIVATOR FOR CELL ELONGATION 3</fullName>
    </alternativeName>
    <alternativeName>
        <fullName>Transcription factor EN 87</fullName>
    </alternativeName>
    <alternativeName>
        <fullName>bHLH transcription factor bHLH077</fullName>
    </alternativeName>
</protein>
<proteinExistence type="evidence at protein level"/>
<reference key="1">
    <citation type="journal article" date="2000" name="DNA Res.">
        <title>Structural analysis of Arabidopsis thaliana chromosome 3. II. Sequence features of the 4,251,695 bp regions covered by 90 P1, TAC and BAC clones.</title>
        <authorList>
            <person name="Kaneko T."/>
            <person name="Katoh T."/>
            <person name="Sato S."/>
            <person name="Nakamura Y."/>
            <person name="Asamizu E."/>
            <person name="Tabata S."/>
        </authorList>
    </citation>
    <scope>NUCLEOTIDE SEQUENCE [LARGE SCALE GENOMIC DNA]</scope>
    <source>
        <strain>cv. Columbia</strain>
    </source>
</reference>
<reference key="2">
    <citation type="journal article" date="2017" name="Plant J.">
        <title>Araport11: a complete reannotation of the Arabidopsis thaliana reference genome.</title>
        <authorList>
            <person name="Cheng C.Y."/>
            <person name="Krishnakumar V."/>
            <person name="Chan A.P."/>
            <person name="Thibaud-Nissen F."/>
            <person name="Schobel S."/>
            <person name="Town C.D."/>
        </authorList>
    </citation>
    <scope>GENOME REANNOTATION</scope>
    <source>
        <strain>cv. Columbia</strain>
    </source>
</reference>
<reference key="3">
    <citation type="journal article" date="2003" name="Science">
        <title>Empirical analysis of transcriptional activity in the Arabidopsis genome.</title>
        <authorList>
            <person name="Yamada K."/>
            <person name="Lim J."/>
            <person name="Dale J.M."/>
            <person name="Chen H."/>
            <person name="Shinn P."/>
            <person name="Palm C.J."/>
            <person name="Southwick A.M."/>
            <person name="Wu H.C."/>
            <person name="Kim C.J."/>
            <person name="Nguyen M."/>
            <person name="Pham P.K."/>
            <person name="Cheuk R.F."/>
            <person name="Karlin-Newmann G."/>
            <person name="Liu S.X."/>
            <person name="Lam B."/>
            <person name="Sakano H."/>
            <person name="Wu T."/>
            <person name="Yu G."/>
            <person name="Miranda M."/>
            <person name="Quach H.L."/>
            <person name="Tripp M."/>
            <person name="Chang C.H."/>
            <person name="Lee J.M."/>
            <person name="Toriumi M.J."/>
            <person name="Chan M.M."/>
            <person name="Tang C.C."/>
            <person name="Onodera C.S."/>
            <person name="Deng J.M."/>
            <person name="Akiyama K."/>
            <person name="Ansari Y."/>
            <person name="Arakawa T."/>
            <person name="Banh J."/>
            <person name="Banno F."/>
            <person name="Bowser L."/>
            <person name="Brooks S.Y."/>
            <person name="Carninci P."/>
            <person name="Chao Q."/>
            <person name="Choy N."/>
            <person name="Enju A."/>
            <person name="Goldsmith A.D."/>
            <person name="Gurjal M."/>
            <person name="Hansen N.F."/>
            <person name="Hayashizaki Y."/>
            <person name="Johnson-Hopson C."/>
            <person name="Hsuan V.W."/>
            <person name="Iida K."/>
            <person name="Karnes M."/>
            <person name="Khan S."/>
            <person name="Koesema E."/>
            <person name="Ishida J."/>
            <person name="Jiang P.X."/>
            <person name="Jones T."/>
            <person name="Kawai J."/>
            <person name="Kamiya A."/>
            <person name="Meyers C."/>
            <person name="Nakajima M."/>
            <person name="Narusaka M."/>
            <person name="Seki M."/>
            <person name="Sakurai T."/>
            <person name="Satou M."/>
            <person name="Tamse R."/>
            <person name="Vaysberg M."/>
            <person name="Wallender E.K."/>
            <person name="Wong C."/>
            <person name="Yamamura Y."/>
            <person name="Yuan S."/>
            <person name="Shinozaki K."/>
            <person name="Davis R.W."/>
            <person name="Theologis A."/>
            <person name="Ecker J.R."/>
        </authorList>
    </citation>
    <scope>NUCLEOTIDE SEQUENCE [LARGE SCALE MRNA]</scope>
    <source>
        <strain>cv. Columbia</strain>
    </source>
</reference>
<reference key="4">
    <citation type="journal article" date="2008" name="Plant Physiol.">
        <title>Sequence variation of microRNAs and their binding sites in Arabidopsis.</title>
        <authorList>
            <person name="Ehrenreich I.M."/>
            <person name="Purugganan M.D."/>
        </authorList>
    </citation>
    <scope>NUCLEOTIDE SEQUENCE [GENOMIC DNA] OF 1-112</scope>
    <scope>VARIANT SER-29</scope>
    <source>
        <strain>cv. Ag-0</strain>
        <strain>cv. An-1</strain>
        <strain>cv. Bay-0</strain>
        <strain>cv. Br-0</strain>
        <strain>cv. C24</strain>
        <strain>cv. Ct-1</strain>
        <strain>cv. Cvi-0</strain>
        <strain>cv. Edi-0</strain>
        <strain>cv. Ei-2</strain>
        <strain>cv. Ga-0</strain>
        <strain>cv. Gy-0</strain>
        <strain>cv. Kas-2</strain>
        <strain>cv. Ll-0</strain>
        <strain>cv. Mrk-0</strain>
        <strain>cv. Ms-0</strain>
        <strain>cv. Mt-0</strain>
        <strain>cv. Nd-1</strain>
        <strain>cv. Nok-3</strain>
        <strain>cv. Oy-0</strain>
        <strain>cv. Sorbo</strain>
        <strain>cv. Wa-1</strain>
        <strain>cv. Wassilewskija</strain>
        <strain>cv. Wei-0</strain>
        <strain>cv. Wt-5</strain>
    </source>
</reference>
<reference key="5">
    <citation type="journal article" date="2003" name="Mol. Biol. Evol.">
        <title>The basic helix-loop-helix transcription factor family in plants: a genome-wide study of protein structure and functional diversity.</title>
        <authorList>
            <person name="Heim M.A."/>
            <person name="Jakoby M."/>
            <person name="Werber M."/>
            <person name="Martin C."/>
            <person name="Weisshaar B."/>
            <person name="Bailey P.C."/>
        </authorList>
    </citation>
    <scope>NUCLEOTIDE SEQUENCE [MRNA] OF 218-371</scope>
    <scope>TISSUE SPECIFICITY</scope>
    <scope>GENE FAMILY</scope>
    <scope>NOMENCLATURE</scope>
    <source>
        <strain>cv. Columbia</strain>
    </source>
</reference>
<reference key="6">
    <citation type="journal article" date="2003" name="Plant Cell">
        <title>The Arabidopsis basic/helix-loop-helix transcription factor family.</title>
        <authorList>
            <person name="Toledo-Ortiz G."/>
            <person name="Huq E."/>
            <person name="Quail P.H."/>
        </authorList>
    </citation>
    <scope>GENE FAMILY</scope>
</reference>
<reference key="7">
    <citation type="journal article" date="2003" name="Plant Cell">
        <title>Update on the basic helix-loop-helix transcription factor gene family in Arabidopsis thaliana.</title>
        <authorList>
            <person name="Bailey P.C."/>
            <person name="Martin C."/>
            <person name="Toledo-Ortiz G."/>
            <person name="Quail P.H."/>
            <person name="Huq E."/>
            <person name="Heim M.A."/>
            <person name="Jakoby M."/>
            <person name="Werber M."/>
            <person name="Weisshaar B."/>
        </authorList>
    </citation>
    <scope>GENE FAMILY</scope>
    <scope>NOMENCLATURE</scope>
</reference>
<reference key="8">
    <citation type="journal article" date="2012" name="Plant Cell">
        <title>A triantagonistic basic helix-loop-helix system regulates cell elongation in Arabidopsis.</title>
        <authorList>
            <person name="Ikeda M."/>
            <person name="Fujiwara S."/>
            <person name="Mitsuda N."/>
            <person name="Ohme-Takagi M."/>
        </authorList>
    </citation>
    <scope>INTERACTION WITH IBH1</scope>
</reference>
<comment type="subunit">
    <text evidence="5 6">Homodimer (Probable). Interacts with IBH1.</text>
</comment>
<comment type="interaction">
    <interactant intactId="EBI-15192967">
        <id>Q9LK48</id>
    </interactant>
    <interactant intactId="EBI-15192969">
        <id>Q9M0B9</id>
        <label>IBL1</label>
    </interactant>
    <organismsDiffer>false</organismsDiffer>
    <experiments>3</experiments>
</comment>
<comment type="subcellular location">
    <subcellularLocation>
        <location evidence="1">Nucleus</location>
    </subcellularLocation>
</comment>
<comment type="tissue specificity">
    <text evidence="3">Expressed constitutively in roots, leaves, stems, and flowers.</text>
</comment>
<gene>
    <name type="primary">BHLH77</name>
    <name type="synonym">ACE3</name>
    <name type="synonym">EN87</name>
    <name type="ordered locus">At3g23690</name>
    <name type="ORF">MYM9.3</name>
</gene>
<dbReference type="EMBL" id="AP000377">
    <property type="protein sequence ID" value="BAB01846.1"/>
    <property type="molecule type" value="Genomic_DNA"/>
</dbReference>
<dbReference type="EMBL" id="CP002686">
    <property type="protein sequence ID" value="AEE76802.1"/>
    <property type="molecule type" value="Genomic_DNA"/>
</dbReference>
<dbReference type="EMBL" id="AY065441">
    <property type="protein sequence ID" value="AAL38882.1"/>
    <property type="molecule type" value="mRNA"/>
</dbReference>
<dbReference type="EMBL" id="AY096536">
    <property type="protein sequence ID" value="AAM20186.1"/>
    <property type="molecule type" value="mRNA"/>
</dbReference>
<dbReference type="EMBL" id="EU550216">
    <property type="protein sequence ID" value="ACB30978.1"/>
    <property type="molecule type" value="Genomic_DNA"/>
</dbReference>
<dbReference type="EMBL" id="EU550217">
    <property type="protein sequence ID" value="ACB30979.1"/>
    <property type="molecule type" value="Genomic_DNA"/>
</dbReference>
<dbReference type="EMBL" id="EU550218">
    <property type="protein sequence ID" value="ACB30980.1"/>
    <property type="molecule type" value="Genomic_DNA"/>
</dbReference>
<dbReference type="EMBL" id="EU550219">
    <property type="protein sequence ID" value="ACB30981.1"/>
    <property type="molecule type" value="Genomic_DNA"/>
</dbReference>
<dbReference type="EMBL" id="EU550220">
    <property type="protein sequence ID" value="ACB30982.1"/>
    <property type="molecule type" value="Genomic_DNA"/>
</dbReference>
<dbReference type="EMBL" id="EU550221">
    <property type="protein sequence ID" value="ACB30983.1"/>
    <property type="molecule type" value="Genomic_DNA"/>
</dbReference>
<dbReference type="EMBL" id="EU550222">
    <property type="protein sequence ID" value="ACB30984.1"/>
    <property type="molecule type" value="Genomic_DNA"/>
</dbReference>
<dbReference type="EMBL" id="EU550223">
    <property type="protein sequence ID" value="ACB30985.1"/>
    <property type="molecule type" value="Genomic_DNA"/>
</dbReference>
<dbReference type="EMBL" id="EU550224">
    <property type="protein sequence ID" value="ACB30986.1"/>
    <property type="molecule type" value="Genomic_DNA"/>
</dbReference>
<dbReference type="EMBL" id="EU550225">
    <property type="protein sequence ID" value="ACB30987.1"/>
    <property type="molecule type" value="Genomic_DNA"/>
</dbReference>
<dbReference type="EMBL" id="EU550226">
    <property type="protein sequence ID" value="ACB30988.1"/>
    <property type="molecule type" value="Genomic_DNA"/>
</dbReference>
<dbReference type="EMBL" id="EU550227">
    <property type="protein sequence ID" value="ACB30989.1"/>
    <property type="molecule type" value="Genomic_DNA"/>
</dbReference>
<dbReference type="EMBL" id="EU550228">
    <property type="protein sequence ID" value="ACB30990.1"/>
    <property type="molecule type" value="Genomic_DNA"/>
</dbReference>
<dbReference type="EMBL" id="EU550229">
    <property type="protein sequence ID" value="ACB30991.1"/>
    <property type="molecule type" value="Genomic_DNA"/>
</dbReference>
<dbReference type="EMBL" id="EU550230">
    <property type="protein sequence ID" value="ACB30992.1"/>
    <property type="molecule type" value="Genomic_DNA"/>
</dbReference>
<dbReference type="EMBL" id="EU550231">
    <property type="protein sequence ID" value="ACB30993.1"/>
    <property type="molecule type" value="Genomic_DNA"/>
</dbReference>
<dbReference type="EMBL" id="EU550232">
    <property type="protein sequence ID" value="ACB30994.1"/>
    <property type="molecule type" value="Genomic_DNA"/>
</dbReference>
<dbReference type="EMBL" id="EU550233">
    <property type="protein sequence ID" value="ACB30995.1"/>
    <property type="molecule type" value="Genomic_DNA"/>
</dbReference>
<dbReference type="EMBL" id="EU550234">
    <property type="protein sequence ID" value="ACB30996.1"/>
    <property type="molecule type" value="Genomic_DNA"/>
</dbReference>
<dbReference type="EMBL" id="EU550235">
    <property type="protein sequence ID" value="ACB30997.1"/>
    <property type="molecule type" value="Genomic_DNA"/>
</dbReference>
<dbReference type="EMBL" id="EU550236">
    <property type="protein sequence ID" value="ACB30998.1"/>
    <property type="molecule type" value="Genomic_DNA"/>
</dbReference>
<dbReference type="EMBL" id="EU550237">
    <property type="protein sequence ID" value="ACB30999.1"/>
    <property type="molecule type" value="Genomic_DNA"/>
</dbReference>
<dbReference type="EMBL" id="EU550238">
    <property type="protein sequence ID" value="ACB31000.1"/>
    <property type="molecule type" value="Genomic_DNA"/>
</dbReference>
<dbReference type="EMBL" id="EU550239">
    <property type="protein sequence ID" value="ACB31001.1"/>
    <property type="molecule type" value="Genomic_DNA"/>
</dbReference>
<dbReference type="EMBL" id="AF488609">
    <property type="status" value="NOT_ANNOTATED_CDS"/>
    <property type="molecule type" value="mRNA"/>
</dbReference>
<dbReference type="RefSeq" id="NP_189011.2">
    <property type="nucleotide sequence ID" value="NM_113273.4"/>
</dbReference>
<dbReference type="SMR" id="Q9LK48"/>
<dbReference type="BioGRID" id="7282">
    <property type="interactions" value="13"/>
</dbReference>
<dbReference type="FunCoup" id="Q9LK48">
    <property type="interactions" value="121"/>
</dbReference>
<dbReference type="IntAct" id="Q9LK48">
    <property type="interactions" value="13"/>
</dbReference>
<dbReference type="STRING" id="3702.Q9LK48"/>
<dbReference type="iPTMnet" id="Q9LK48"/>
<dbReference type="PaxDb" id="3702-AT3G23690.1"/>
<dbReference type="ProteomicsDB" id="240783"/>
<dbReference type="EnsemblPlants" id="AT3G23690.1">
    <property type="protein sequence ID" value="AT3G23690.1"/>
    <property type="gene ID" value="AT3G23690"/>
</dbReference>
<dbReference type="GeneID" id="821950"/>
<dbReference type="Gramene" id="AT3G23690.1">
    <property type="protein sequence ID" value="AT3G23690.1"/>
    <property type="gene ID" value="AT3G23690"/>
</dbReference>
<dbReference type="KEGG" id="ath:AT3G23690"/>
<dbReference type="Araport" id="AT3G23690"/>
<dbReference type="TAIR" id="AT3G23690">
    <property type="gene designation" value="CIL2"/>
</dbReference>
<dbReference type="eggNOG" id="ENOG502QRSF">
    <property type="taxonomic scope" value="Eukaryota"/>
</dbReference>
<dbReference type="HOGENOM" id="CLU_025018_5_1_1"/>
<dbReference type="InParanoid" id="Q9LK48"/>
<dbReference type="OMA" id="TPGFWEN"/>
<dbReference type="OrthoDB" id="775589at2759"/>
<dbReference type="PhylomeDB" id="Q9LK48"/>
<dbReference type="PRO" id="PR:Q9LK48"/>
<dbReference type="Proteomes" id="UP000006548">
    <property type="component" value="Chromosome 3"/>
</dbReference>
<dbReference type="ExpressionAtlas" id="Q9LK48">
    <property type="expression patterns" value="baseline and differential"/>
</dbReference>
<dbReference type="GO" id="GO:0005634">
    <property type="term" value="C:nucleus"/>
    <property type="evidence" value="ECO:0007669"/>
    <property type="project" value="UniProtKB-SubCell"/>
</dbReference>
<dbReference type="GO" id="GO:0003700">
    <property type="term" value="F:DNA-binding transcription factor activity"/>
    <property type="evidence" value="ECO:0000250"/>
    <property type="project" value="TAIR"/>
</dbReference>
<dbReference type="GO" id="GO:0046983">
    <property type="term" value="F:protein dimerization activity"/>
    <property type="evidence" value="ECO:0007669"/>
    <property type="project" value="InterPro"/>
</dbReference>
<dbReference type="GO" id="GO:0000976">
    <property type="term" value="F:transcription cis-regulatory region binding"/>
    <property type="evidence" value="ECO:0000353"/>
    <property type="project" value="TAIR"/>
</dbReference>
<dbReference type="GO" id="GO:0006355">
    <property type="term" value="P:regulation of DNA-templated transcription"/>
    <property type="evidence" value="ECO:0000304"/>
    <property type="project" value="TAIR"/>
</dbReference>
<dbReference type="CDD" id="cd18919">
    <property type="entry name" value="bHLH_AtBPE_like"/>
    <property type="match status" value="1"/>
</dbReference>
<dbReference type="FunFam" id="4.10.280.10:FF:000002">
    <property type="entry name" value="Basic helix-loop-helix transcription factor"/>
    <property type="match status" value="1"/>
</dbReference>
<dbReference type="Gene3D" id="4.10.280.10">
    <property type="entry name" value="Helix-loop-helix DNA-binding domain"/>
    <property type="match status" value="1"/>
</dbReference>
<dbReference type="InterPro" id="IPR011598">
    <property type="entry name" value="bHLH_dom"/>
</dbReference>
<dbReference type="InterPro" id="IPR024097">
    <property type="entry name" value="bHLH_ZIP_TF"/>
</dbReference>
<dbReference type="InterPro" id="IPR036638">
    <property type="entry name" value="HLH_DNA-bd_sf"/>
</dbReference>
<dbReference type="PANTHER" id="PTHR12565">
    <property type="entry name" value="STEROL REGULATORY ELEMENT-BINDING PROTEIN"/>
    <property type="match status" value="1"/>
</dbReference>
<dbReference type="PANTHER" id="PTHR12565:SF453">
    <property type="entry name" value="TRANSCRIPTION FACTOR BHLH77"/>
    <property type="match status" value="1"/>
</dbReference>
<dbReference type="Pfam" id="PF00010">
    <property type="entry name" value="HLH"/>
    <property type="match status" value="1"/>
</dbReference>
<dbReference type="SMART" id="SM00353">
    <property type="entry name" value="HLH"/>
    <property type="match status" value="1"/>
</dbReference>
<dbReference type="SUPFAM" id="SSF47459">
    <property type="entry name" value="HLH, helix-loop-helix DNA-binding domain"/>
    <property type="match status" value="1"/>
</dbReference>
<dbReference type="PROSITE" id="PS50888">
    <property type="entry name" value="BHLH"/>
    <property type="match status" value="1"/>
</dbReference>
<accession>Q9LK48</accession>
<accession>B2CTL5</accession>
<accession>B2CTM6</accession>
<feature type="chain" id="PRO_0000358769" description="Transcription factor bHLH77">
    <location>
        <begin position="1"/>
        <end position="371"/>
    </location>
</feature>
<feature type="domain" description="bHLH" evidence="1">
    <location>
        <begin position="197"/>
        <end position="247"/>
    </location>
</feature>
<feature type="region of interest" description="Disordered" evidence="2">
    <location>
        <begin position="1"/>
        <end position="25"/>
    </location>
</feature>
<feature type="region of interest" description="Disordered" evidence="2">
    <location>
        <begin position="65"/>
        <end position="206"/>
    </location>
</feature>
<feature type="region of interest" description="Disordered" evidence="2">
    <location>
        <begin position="352"/>
        <end position="371"/>
    </location>
</feature>
<feature type="compositionally biased region" description="Polar residues" evidence="2">
    <location>
        <begin position="85"/>
        <end position="96"/>
    </location>
</feature>
<feature type="compositionally biased region" description="Low complexity" evidence="2">
    <location>
        <begin position="128"/>
        <end position="142"/>
    </location>
</feature>
<feature type="compositionally biased region" description="Basic and acidic residues" evidence="2">
    <location>
        <begin position="165"/>
        <end position="190"/>
    </location>
</feature>
<feature type="sequence variant" description="In strain: cv. Cvi-0." evidence="4">
    <original>T</original>
    <variation>S</variation>
    <location>
        <position position="29"/>
    </location>
</feature>
<feature type="sequence conflict" description="In Ref. 5; AF488609." evidence="6" ref="5">
    <original>T</original>
    <variation>P</variation>
    <location>
        <position position="260"/>
    </location>
</feature>
<feature type="sequence conflict" description="In Ref. 5; AF488609." evidence="6" ref="5">
    <original>S</original>
    <variation>F</variation>
    <location>
        <position position="361"/>
    </location>
</feature>
<keyword id="KW-0238">DNA-binding</keyword>
<keyword id="KW-0539">Nucleus</keyword>
<keyword id="KW-1185">Reference proteome</keyword>
<keyword id="KW-0804">Transcription</keyword>
<keyword id="KW-0805">Transcription regulation</keyword>